<keyword id="KW-0030">Aminoacyl-tRNA synthetase</keyword>
<keyword id="KW-0067">ATP-binding</keyword>
<keyword id="KW-0963">Cytoplasm</keyword>
<keyword id="KW-0436">Ligase</keyword>
<keyword id="KW-0547">Nucleotide-binding</keyword>
<keyword id="KW-0648">Protein biosynthesis</keyword>
<keyword id="KW-1185">Reference proteome</keyword>
<protein>
    <recommendedName>
        <fullName evidence="1">Aspartate--tRNA ligase</fullName>
        <ecNumber evidence="1">6.1.1.12</ecNumber>
    </recommendedName>
    <alternativeName>
        <fullName evidence="1">Aspartyl-tRNA synthetase</fullName>
        <shortName evidence="1">AspRS</shortName>
    </alternativeName>
</protein>
<feature type="chain" id="PRO_0000110888" description="Aspartate--tRNA ligase">
    <location>
        <begin position="1"/>
        <end position="598"/>
    </location>
</feature>
<feature type="region of interest" description="Aspartate" evidence="1">
    <location>
        <begin position="199"/>
        <end position="202"/>
    </location>
</feature>
<feature type="binding site" evidence="1">
    <location>
        <position position="175"/>
    </location>
    <ligand>
        <name>L-aspartate</name>
        <dbReference type="ChEBI" id="CHEBI:29991"/>
    </ligand>
</feature>
<feature type="binding site" evidence="1">
    <location>
        <begin position="221"/>
        <end position="223"/>
    </location>
    <ligand>
        <name>ATP</name>
        <dbReference type="ChEBI" id="CHEBI:30616"/>
    </ligand>
</feature>
<feature type="binding site" evidence="1">
    <location>
        <position position="221"/>
    </location>
    <ligand>
        <name>L-aspartate</name>
        <dbReference type="ChEBI" id="CHEBI:29991"/>
    </ligand>
</feature>
<feature type="binding site" evidence="1">
    <location>
        <position position="230"/>
    </location>
    <ligand>
        <name>ATP</name>
        <dbReference type="ChEBI" id="CHEBI:30616"/>
    </ligand>
</feature>
<feature type="binding site" evidence="1">
    <location>
        <position position="450"/>
    </location>
    <ligand>
        <name>L-aspartate</name>
        <dbReference type="ChEBI" id="CHEBI:29991"/>
    </ligand>
</feature>
<feature type="binding site" evidence="1">
    <location>
        <position position="486"/>
    </location>
    <ligand>
        <name>ATP</name>
        <dbReference type="ChEBI" id="CHEBI:30616"/>
    </ligand>
</feature>
<feature type="binding site" evidence="1">
    <location>
        <position position="493"/>
    </location>
    <ligand>
        <name>L-aspartate</name>
        <dbReference type="ChEBI" id="CHEBI:29991"/>
    </ligand>
</feature>
<feature type="binding site" evidence="1">
    <location>
        <begin position="538"/>
        <end position="541"/>
    </location>
    <ligand>
        <name>ATP</name>
        <dbReference type="ChEBI" id="CHEBI:30616"/>
    </ligand>
</feature>
<sequence length="598" mass="67603">MKRTTYAGLINEDYLGQTVTLQGWVQKRRDLGSLIFIDLRDREGIVQLVFSQEFSADALAVADQLRGEYVIEVQGTVVNRNADAVNDRMKTGKVEVEIHDAKILNKAKTPPFYIQDDINVSDELRLKYRYLDLRRPEMQRGLKIRNGITQAVHSYFDANGFYDIETPFLTKSTPEGARDYLVPSRVYQGHFYALPQSPQLFKQLLMGAGFDRYYQIARCFRDEDLRGDRQPEFTQIDMETSFLTAEEIQSYTEGLIKQVMKDVKGVDIKTPFTRMTWQEAMDRFGSEKPDVRFGMELKDMGVAVSNAGFKVFDNALANGGLVKAIAVPGGADQYSRKQIDAYTEYVKRFGAKGLAWMKVTDDGFSGPVAKFFKNDGDFEAITSAAAAKPGDLLLFAADSFKVVSDTLGYLRTAIAKELDLIDQDQYAYLWVVDWPLFEYDEGIERWVPAHHPFTMPNEEDVHYLNDGEDPHKAHAQSYDIILNGYELGGGSIRIHTRELQEKMFKALDFTKERAQEQFGFLLDALDMGFPPHGGLAIGLDRFAMLLSGNDNIREVIAFPKNSKASEPMTNAPSRVSDQQLADLDLNITNPVTDDEPTE</sequence>
<gene>
    <name evidence="1" type="primary">aspS</name>
    <name type="ordered locus">lp_1980</name>
</gene>
<accession>Q88VQ8</accession>
<accession>F9UPU4</accession>
<proteinExistence type="inferred from homology"/>
<dbReference type="EC" id="6.1.1.12" evidence="1"/>
<dbReference type="EMBL" id="AL935263">
    <property type="protein sequence ID" value="CCC79233.1"/>
    <property type="molecule type" value="Genomic_DNA"/>
</dbReference>
<dbReference type="RefSeq" id="WP_011101612.1">
    <property type="nucleotide sequence ID" value="NC_004567.2"/>
</dbReference>
<dbReference type="RefSeq" id="YP_004889747.1">
    <property type="nucleotide sequence ID" value="NC_004567.2"/>
</dbReference>
<dbReference type="SMR" id="Q88VQ8"/>
<dbReference type="STRING" id="220668.lp_1980"/>
<dbReference type="EnsemblBacteria" id="CCC79233">
    <property type="protein sequence ID" value="CCC79233"/>
    <property type="gene ID" value="lp_1980"/>
</dbReference>
<dbReference type="KEGG" id="lpl:lp_1980"/>
<dbReference type="PATRIC" id="fig|220668.9.peg.1673"/>
<dbReference type="eggNOG" id="COG0173">
    <property type="taxonomic scope" value="Bacteria"/>
</dbReference>
<dbReference type="HOGENOM" id="CLU_014330_3_2_9"/>
<dbReference type="OrthoDB" id="9802326at2"/>
<dbReference type="PhylomeDB" id="Q88VQ8"/>
<dbReference type="Proteomes" id="UP000000432">
    <property type="component" value="Chromosome"/>
</dbReference>
<dbReference type="GO" id="GO:0005737">
    <property type="term" value="C:cytoplasm"/>
    <property type="evidence" value="ECO:0007669"/>
    <property type="project" value="UniProtKB-SubCell"/>
</dbReference>
<dbReference type="GO" id="GO:0004815">
    <property type="term" value="F:aspartate-tRNA ligase activity"/>
    <property type="evidence" value="ECO:0007669"/>
    <property type="project" value="UniProtKB-UniRule"/>
</dbReference>
<dbReference type="GO" id="GO:0005524">
    <property type="term" value="F:ATP binding"/>
    <property type="evidence" value="ECO:0007669"/>
    <property type="project" value="UniProtKB-UniRule"/>
</dbReference>
<dbReference type="GO" id="GO:0140096">
    <property type="term" value="F:catalytic activity, acting on a protein"/>
    <property type="evidence" value="ECO:0007669"/>
    <property type="project" value="UniProtKB-ARBA"/>
</dbReference>
<dbReference type="GO" id="GO:0003676">
    <property type="term" value="F:nucleic acid binding"/>
    <property type="evidence" value="ECO:0007669"/>
    <property type="project" value="InterPro"/>
</dbReference>
<dbReference type="GO" id="GO:0016740">
    <property type="term" value="F:transferase activity"/>
    <property type="evidence" value="ECO:0007669"/>
    <property type="project" value="UniProtKB-ARBA"/>
</dbReference>
<dbReference type="GO" id="GO:0006422">
    <property type="term" value="P:aspartyl-tRNA aminoacylation"/>
    <property type="evidence" value="ECO:0007669"/>
    <property type="project" value="UniProtKB-UniRule"/>
</dbReference>
<dbReference type="CDD" id="cd00777">
    <property type="entry name" value="AspRS_core"/>
    <property type="match status" value="1"/>
</dbReference>
<dbReference type="CDD" id="cd04317">
    <property type="entry name" value="EcAspRS_like_N"/>
    <property type="match status" value="1"/>
</dbReference>
<dbReference type="Gene3D" id="3.30.930.10">
    <property type="entry name" value="Bira Bifunctional Protein, Domain 2"/>
    <property type="match status" value="1"/>
</dbReference>
<dbReference type="Gene3D" id="3.30.1360.30">
    <property type="entry name" value="GAD-like domain"/>
    <property type="match status" value="1"/>
</dbReference>
<dbReference type="Gene3D" id="2.40.50.140">
    <property type="entry name" value="Nucleic acid-binding proteins"/>
    <property type="match status" value="1"/>
</dbReference>
<dbReference type="HAMAP" id="MF_00044">
    <property type="entry name" value="Asp_tRNA_synth_type1"/>
    <property type="match status" value="1"/>
</dbReference>
<dbReference type="InterPro" id="IPR004364">
    <property type="entry name" value="Aa-tRNA-synt_II"/>
</dbReference>
<dbReference type="InterPro" id="IPR006195">
    <property type="entry name" value="aa-tRNA-synth_II"/>
</dbReference>
<dbReference type="InterPro" id="IPR045864">
    <property type="entry name" value="aa-tRNA-synth_II/BPL/LPL"/>
</dbReference>
<dbReference type="InterPro" id="IPR004524">
    <property type="entry name" value="Asp-tRNA-ligase_1"/>
</dbReference>
<dbReference type="InterPro" id="IPR047089">
    <property type="entry name" value="Asp-tRNA-ligase_1_N"/>
</dbReference>
<dbReference type="InterPro" id="IPR002312">
    <property type="entry name" value="Asp/Asn-tRNA-synth_IIb"/>
</dbReference>
<dbReference type="InterPro" id="IPR047090">
    <property type="entry name" value="AspRS_core"/>
</dbReference>
<dbReference type="InterPro" id="IPR004115">
    <property type="entry name" value="GAD-like_sf"/>
</dbReference>
<dbReference type="InterPro" id="IPR029351">
    <property type="entry name" value="GAD_dom"/>
</dbReference>
<dbReference type="InterPro" id="IPR012340">
    <property type="entry name" value="NA-bd_OB-fold"/>
</dbReference>
<dbReference type="InterPro" id="IPR004365">
    <property type="entry name" value="NA-bd_OB_tRNA"/>
</dbReference>
<dbReference type="NCBIfam" id="TIGR00459">
    <property type="entry name" value="aspS_bact"/>
    <property type="match status" value="1"/>
</dbReference>
<dbReference type="NCBIfam" id="NF001750">
    <property type="entry name" value="PRK00476.1"/>
    <property type="match status" value="1"/>
</dbReference>
<dbReference type="PANTHER" id="PTHR22594:SF5">
    <property type="entry name" value="ASPARTATE--TRNA LIGASE, MITOCHONDRIAL"/>
    <property type="match status" value="1"/>
</dbReference>
<dbReference type="PANTHER" id="PTHR22594">
    <property type="entry name" value="ASPARTYL/LYSYL-TRNA SYNTHETASE"/>
    <property type="match status" value="1"/>
</dbReference>
<dbReference type="Pfam" id="PF02938">
    <property type="entry name" value="GAD"/>
    <property type="match status" value="1"/>
</dbReference>
<dbReference type="Pfam" id="PF00152">
    <property type="entry name" value="tRNA-synt_2"/>
    <property type="match status" value="1"/>
</dbReference>
<dbReference type="Pfam" id="PF01336">
    <property type="entry name" value="tRNA_anti-codon"/>
    <property type="match status" value="1"/>
</dbReference>
<dbReference type="PRINTS" id="PR01042">
    <property type="entry name" value="TRNASYNTHASP"/>
</dbReference>
<dbReference type="SUPFAM" id="SSF55681">
    <property type="entry name" value="Class II aaRS and biotin synthetases"/>
    <property type="match status" value="1"/>
</dbReference>
<dbReference type="SUPFAM" id="SSF55261">
    <property type="entry name" value="GAD domain-like"/>
    <property type="match status" value="1"/>
</dbReference>
<dbReference type="SUPFAM" id="SSF50249">
    <property type="entry name" value="Nucleic acid-binding proteins"/>
    <property type="match status" value="1"/>
</dbReference>
<dbReference type="PROSITE" id="PS50862">
    <property type="entry name" value="AA_TRNA_LIGASE_II"/>
    <property type="match status" value="1"/>
</dbReference>
<evidence type="ECO:0000255" key="1">
    <source>
        <dbReference type="HAMAP-Rule" id="MF_00044"/>
    </source>
</evidence>
<reference key="1">
    <citation type="journal article" date="2003" name="Proc. Natl. Acad. Sci. U.S.A.">
        <title>Complete genome sequence of Lactobacillus plantarum WCFS1.</title>
        <authorList>
            <person name="Kleerebezem M."/>
            <person name="Boekhorst J."/>
            <person name="van Kranenburg R."/>
            <person name="Molenaar D."/>
            <person name="Kuipers O.P."/>
            <person name="Leer R."/>
            <person name="Tarchini R."/>
            <person name="Peters S.A."/>
            <person name="Sandbrink H.M."/>
            <person name="Fiers M.W.E.J."/>
            <person name="Stiekema W."/>
            <person name="Klein Lankhorst R.M."/>
            <person name="Bron P.A."/>
            <person name="Hoffer S.M."/>
            <person name="Nierop Groot M.N."/>
            <person name="Kerkhoven R."/>
            <person name="De Vries M."/>
            <person name="Ursing B."/>
            <person name="De Vos W.M."/>
            <person name="Siezen R.J."/>
        </authorList>
    </citation>
    <scope>NUCLEOTIDE SEQUENCE [LARGE SCALE GENOMIC DNA]</scope>
    <source>
        <strain>ATCC BAA-793 / NCIMB 8826 / WCFS1</strain>
    </source>
</reference>
<reference key="2">
    <citation type="journal article" date="2012" name="J. Bacteriol.">
        <title>Complete resequencing and reannotation of the Lactobacillus plantarum WCFS1 genome.</title>
        <authorList>
            <person name="Siezen R.J."/>
            <person name="Francke C."/>
            <person name="Renckens B."/>
            <person name="Boekhorst J."/>
            <person name="Wels M."/>
            <person name="Kleerebezem M."/>
            <person name="van Hijum S.A."/>
        </authorList>
    </citation>
    <scope>NUCLEOTIDE SEQUENCE [LARGE SCALE GENOMIC DNA]</scope>
    <scope>GENOME REANNOTATION</scope>
    <source>
        <strain>ATCC BAA-793 / NCIMB 8826 / WCFS1</strain>
    </source>
</reference>
<comment type="function">
    <text evidence="1">Catalyzes the attachment of L-aspartate to tRNA(Asp) in a two-step reaction: L-aspartate is first activated by ATP to form Asp-AMP and then transferred to the acceptor end of tRNA(Asp).</text>
</comment>
<comment type="catalytic activity">
    <reaction evidence="1">
        <text>tRNA(Asp) + L-aspartate + ATP = L-aspartyl-tRNA(Asp) + AMP + diphosphate</text>
        <dbReference type="Rhea" id="RHEA:19649"/>
        <dbReference type="Rhea" id="RHEA-COMP:9660"/>
        <dbReference type="Rhea" id="RHEA-COMP:9678"/>
        <dbReference type="ChEBI" id="CHEBI:29991"/>
        <dbReference type="ChEBI" id="CHEBI:30616"/>
        <dbReference type="ChEBI" id="CHEBI:33019"/>
        <dbReference type="ChEBI" id="CHEBI:78442"/>
        <dbReference type="ChEBI" id="CHEBI:78516"/>
        <dbReference type="ChEBI" id="CHEBI:456215"/>
        <dbReference type="EC" id="6.1.1.12"/>
    </reaction>
</comment>
<comment type="subunit">
    <text evidence="1">Homodimer.</text>
</comment>
<comment type="subcellular location">
    <subcellularLocation>
        <location evidence="1">Cytoplasm</location>
    </subcellularLocation>
</comment>
<comment type="similarity">
    <text evidence="1">Belongs to the class-II aminoacyl-tRNA synthetase family. Type 1 subfamily.</text>
</comment>
<name>SYD_LACPL</name>
<organism>
    <name type="scientific">Lactiplantibacillus plantarum (strain ATCC BAA-793 / NCIMB 8826 / WCFS1)</name>
    <name type="common">Lactobacillus plantarum</name>
    <dbReference type="NCBI Taxonomy" id="220668"/>
    <lineage>
        <taxon>Bacteria</taxon>
        <taxon>Bacillati</taxon>
        <taxon>Bacillota</taxon>
        <taxon>Bacilli</taxon>
        <taxon>Lactobacillales</taxon>
        <taxon>Lactobacillaceae</taxon>
        <taxon>Lactiplantibacillus</taxon>
    </lineage>
</organism>